<reference key="1">
    <citation type="journal article" date="2003" name="Proc. Natl. Acad. Sci. U.S.A.">
        <title>The genome of Nanoarchaeum equitans: insights into early archaeal evolution and derived parasitism.</title>
        <authorList>
            <person name="Waters E."/>
            <person name="Hohn M.J."/>
            <person name="Ahel I."/>
            <person name="Graham D.E."/>
            <person name="Adams M.D."/>
            <person name="Barnstead M."/>
            <person name="Beeson K.Y."/>
            <person name="Bibbs L."/>
            <person name="Bolanos R."/>
            <person name="Keller M."/>
            <person name="Kretz K."/>
            <person name="Lin X."/>
            <person name="Mathur E."/>
            <person name="Ni J."/>
            <person name="Podar M."/>
            <person name="Richardson T."/>
            <person name="Sutton G.G."/>
            <person name="Simon M."/>
            <person name="Soell D."/>
            <person name="Stetter K.O."/>
            <person name="Short J.M."/>
            <person name="Noorderwier M."/>
        </authorList>
    </citation>
    <scope>NUCLEOTIDE SEQUENCE [LARGE SCALE GENOMIC DNA]</scope>
    <source>
        <strain>Kin4-M</strain>
    </source>
</reference>
<name>RS7_NANEQ</name>
<feature type="chain" id="PRO_0000344316" description="Small ribosomal subunit protein uS7">
    <location>
        <begin position="1"/>
        <end position="198"/>
    </location>
</feature>
<sequence length="198" mass="22894">MKMKLFGRWDYEDVTVEDPGLRDYINLKPMLIPYSGGRHQKHRFGKAKIPIIERLAGRLMTSGHLGKKHKWTSEHQTGKKYNAYKIIIRTFEIIEKRTKQNPLKVFVKAIENAAPREETTTIEYGGARYPKAVDCSPQRRVDLAIRHMVWGAFHGSRKKPISIEEALAEEIINAYNNSLKSYAIKRKLEIEKTAESAR</sequence>
<comment type="function">
    <text evidence="1">One of the primary rRNA binding proteins, it binds directly to 16S rRNA where it nucleates assembly of the head domain of the 30S subunit. Is located at the subunit interface close to the decoding center.</text>
</comment>
<comment type="subunit">
    <text evidence="1">Part of the 30S ribosomal subunit.</text>
</comment>
<comment type="similarity">
    <text evidence="1">Belongs to the universal ribosomal protein uS7 family.</text>
</comment>
<protein>
    <recommendedName>
        <fullName evidence="1">Small ribosomal subunit protein uS7</fullName>
    </recommendedName>
    <alternativeName>
        <fullName evidence="2">30S ribosomal protein S7</fullName>
    </alternativeName>
</protein>
<dbReference type="EMBL" id="AE017199">
    <property type="protein sequence ID" value="AAR39095.1"/>
    <property type="molecule type" value="Genomic_DNA"/>
</dbReference>
<dbReference type="SMR" id="Q74MR5"/>
<dbReference type="STRING" id="228908.NEQ242"/>
<dbReference type="EnsemblBacteria" id="AAR39095">
    <property type="protein sequence ID" value="AAR39095"/>
    <property type="gene ID" value="NEQ242"/>
</dbReference>
<dbReference type="KEGG" id="neq:NEQ242"/>
<dbReference type="PATRIC" id="fig|228908.8.peg.247"/>
<dbReference type="HOGENOM" id="CLU_063975_0_0_2"/>
<dbReference type="Proteomes" id="UP000000578">
    <property type="component" value="Chromosome"/>
</dbReference>
<dbReference type="GO" id="GO:0015935">
    <property type="term" value="C:small ribosomal subunit"/>
    <property type="evidence" value="ECO:0007669"/>
    <property type="project" value="InterPro"/>
</dbReference>
<dbReference type="GO" id="GO:0019843">
    <property type="term" value="F:rRNA binding"/>
    <property type="evidence" value="ECO:0007669"/>
    <property type="project" value="UniProtKB-UniRule"/>
</dbReference>
<dbReference type="GO" id="GO:0003735">
    <property type="term" value="F:structural constituent of ribosome"/>
    <property type="evidence" value="ECO:0007669"/>
    <property type="project" value="InterPro"/>
</dbReference>
<dbReference type="GO" id="GO:0006412">
    <property type="term" value="P:translation"/>
    <property type="evidence" value="ECO:0007669"/>
    <property type="project" value="UniProtKB-UniRule"/>
</dbReference>
<dbReference type="CDD" id="cd14867">
    <property type="entry name" value="uS7_Eukaryote"/>
    <property type="match status" value="1"/>
</dbReference>
<dbReference type="Gene3D" id="1.10.455.10">
    <property type="entry name" value="Ribosomal protein S7 domain"/>
    <property type="match status" value="1"/>
</dbReference>
<dbReference type="HAMAP" id="MF_00480_A">
    <property type="entry name" value="Ribosomal_uS7_A"/>
    <property type="match status" value="1"/>
</dbReference>
<dbReference type="InterPro" id="IPR000235">
    <property type="entry name" value="Ribosomal_uS7"/>
</dbReference>
<dbReference type="InterPro" id="IPR026018">
    <property type="entry name" value="Ribosomal_uS7_arc"/>
</dbReference>
<dbReference type="InterPro" id="IPR023798">
    <property type="entry name" value="Ribosomal_uS7_dom"/>
</dbReference>
<dbReference type="InterPro" id="IPR036823">
    <property type="entry name" value="Ribosomal_uS7_dom_sf"/>
</dbReference>
<dbReference type="InterPro" id="IPR005716">
    <property type="entry name" value="Ribosomal_uS7_euk/arc"/>
</dbReference>
<dbReference type="NCBIfam" id="NF003106">
    <property type="entry name" value="PRK04027.1"/>
    <property type="match status" value="1"/>
</dbReference>
<dbReference type="NCBIfam" id="TIGR01028">
    <property type="entry name" value="uS7_euk_arch"/>
    <property type="match status" value="1"/>
</dbReference>
<dbReference type="PANTHER" id="PTHR11205">
    <property type="entry name" value="RIBOSOMAL PROTEIN S7"/>
    <property type="match status" value="1"/>
</dbReference>
<dbReference type="Pfam" id="PF00177">
    <property type="entry name" value="Ribosomal_S7"/>
    <property type="match status" value="1"/>
</dbReference>
<dbReference type="PIRSF" id="PIRSF002122">
    <property type="entry name" value="RPS7p_RPS7a_RPS5e_RPS7o"/>
    <property type="match status" value="1"/>
</dbReference>
<dbReference type="SUPFAM" id="SSF47973">
    <property type="entry name" value="Ribosomal protein S7"/>
    <property type="match status" value="1"/>
</dbReference>
<gene>
    <name evidence="1" type="primary">rps7</name>
    <name type="ordered locus">NEQ242</name>
</gene>
<accession>Q74MR5</accession>
<proteinExistence type="inferred from homology"/>
<organism>
    <name type="scientific">Nanoarchaeum equitans (strain Kin4-M)</name>
    <dbReference type="NCBI Taxonomy" id="228908"/>
    <lineage>
        <taxon>Archaea</taxon>
        <taxon>Nanobdellota</taxon>
        <taxon>Candidatus Nanoarchaeia</taxon>
        <taxon>Nanoarchaeales</taxon>
        <taxon>Nanoarchaeaceae</taxon>
        <taxon>Nanoarchaeum</taxon>
    </lineage>
</organism>
<evidence type="ECO:0000255" key="1">
    <source>
        <dbReference type="HAMAP-Rule" id="MF_00480"/>
    </source>
</evidence>
<evidence type="ECO:0000305" key="2"/>
<keyword id="KW-1185">Reference proteome</keyword>
<keyword id="KW-0687">Ribonucleoprotein</keyword>
<keyword id="KW-0689">Ribosomal protein</keyword>
<keyword id="KW-0694">RNA-binding</keyword>
<keyword id="KW-0699">rRNA-binding</keyword>